<dbReference type="EC" id="3.4.19.12" evidence="1"/>
<dbReference type="EMBL" id="CT827859">
    <property type="protein sequence ID" value="CAN88313.1"/>
    <property type="status" value="ALT_SEQ"/>
    <property type="molecule type" value="Genomic_DNA"/>
</dbReference>
<dbReference type="RefSeq" id="NP_001231910.1">
    <property type="nucleotide sequence ID" value="NM_001244981.1"/>
</dbReference>
<dbReference type="SMR" id="A5WWB0"/>
<dbReference type="FunCoup" id="A5WWB0">
    <property type="interactions" value="2153"/>
</dbReference>
<dbReference type="STRING" id="7955.ENSDARP00000116502"/>
<dbReference type="MEROPS" id="C19.052"/>
<dbReference type="PaxDb" id="7955-ENSDARP00000066677"/>
<dbReference type="Ensembl" id="ENSDART00000132093">
    <property type="protein sequence ID" value="ENSDARP00000116502"/>
    <property type="gene ID" value="ENSDARG00000045343"/>
</dbReference>
<dbReference type="GeneID" id="100148916"/>
<dbReference type="KEGG" id="dre:100148916"/>
<dbReference type="AGR" id="ZFIN:ZDB-GENE-070705-213"/>
<dbReference type="CTD" id="64854"/>
<dbReference type="ZFIN" id="ZDB-GENE-070705-213">
    <property type="gene designation" value="usp46"/>
</dbReference>
<dbReference type="eggNOG" id="KOG1864">
    <property type="taxonomic scope" value="Eukaryota"/>
</dbReference>
<dbReference type="HOGENOM" id="CLU_008279_2_0_1"/>
<dbReference type="InParanoid" id="A5WWB0"/>
<dbReference type="OMA" id="ANFGNTC"/>
<dbReference type="OrthoDB" id="27652at2759"/>
<dbReference type="PhylomeDB" id="A5WWB0"/>
<dbReference type="PRO" id="PR:A5WWB0"/>
<dbReference type="Proteomes" id="UP000000437">
    <property type="component" value="Chromosome 20"/>
</dbReference>
<dbReference type="Bgee" id="ENSDARG00000045343">
    <property type="expression patterns" value="Expressed in retina and 18 other cell types or tissues"/>
</dbReference>
<dbReference type="GO" id="GO:0005829">
    <property type="term" value="C:cytosol"/>
    <property type="evidence" value="ECO:0000318"/>
    <property type="project" value="GO_Central"/>
</dbReference>
<dbReference type="GO" id="GO:0005634">
    <property type="term" value="C:nucleus"/>
    <property type="evidence" value="ECO:0000318"/>
    <property type="project" value="GO_Central"/>
</dbReference>
<dbReference type="GO" id="GO:0004843">
    <property type="term" value="F:cysteine-type deubiquitinase activity"/>
    <property type="evidence" value="ECO:0000250"/>
    <property type="project" value="UniProtKB"/>
</dbReference>
<dbReference type="GO" id="GO:0046872">
    <property type="term" value="F:metal ion binding"/>
    <property type="evidence" value="ECO:0007669"/>
    <property type="project" value="UniProtKB-KW"/>
</dbReference>
<dbReference type="GO" id="GO:0016579">
    <property type="term" value="P:protein deubiquitination"/>
    <property type="evidence" value="ECO:0000250"/>
    <property type="project" value="UniProtKB"/>
</dbReference>
<dbReference type="GO" id="GO:0006508">
    <property type="term" value="P:proteolysis"/>
    <property type="evidence" value="ECO:0007669"/>
    <property type="project" value="UniProtKB-KW"/>
</dbReference>
<dbReference type="GO" id="GO:0031647">
    <property type="term" value="P:regulation of protein stability"/>
    <property type="evidence" value="ECO:0000318"/>
    <property type="project" value="GO_Central"/>
</dbReference>
<dbReference type="GO" id="GO:0032228">
    <property type="term" value="P:regulation of synaptic transmission, GABAergic"/>
    <property type="evidence" value="ECO:0000250"/>
    <property type="project" value="UniProtKB"/>
</dbReference>
<dbReference type="CDD" id="cd02663">
    <property type="entry name" value="Peptidase_C19G"/>
    <property type="match status" value="1"/>
</dbReference>
<dbReference type="FunFam" id="3.90.70.10:FF:000003">
    <property type="entry name" value="Ubiquitin carboxyl-terminal hydrolase 46"/>
    <property type="match status" value="1"/>
</dbReference>
<dbReference type="Gene3D" id="3.90.70.10">
    <property type="entry name" value="Cysteine proteinases"/>
    <property type="match status" value="1"/>
</dbReference>
<dbReference type="InterPro" id="IPR038765">
    <property type="entry name" value="Papain-like_cys_pep_sf"/>
</dbReference>
<dbReference type="InterPro" id="IPR050164">
    <property type="entry name" value="Peptidase_C19"/>
</dbReference>
<dbReference type="InterPro" id="IPR001394">
    <property type="entry name" value="Peptidase_C19_UCH"/>
</dbReference>
<dbReference type="InterPro" id="IPR018200">
    <property type="entry name" value="USP_CS"/>
</dbReference>
<dbReference type="InterPro" id="IPR028889">
    <property type="entry name" value="USP_dom"/>
</dbReference>
<dbReference type="PANTHER" id="PTHR24006">
    <property type="entry name" value="UBIQUITIN CARBOXYL-TERMINAL HYDROLASE"/>
    <property type="match status" value="1"/>
</dbReference>
<dbReference type="PANTHER" id="PTHR24006:SF714">
    <property type="entry name" value="UBIQUITIN CARBOXYL-TERMINAL HYDROLASE 46"/>
    <property type="match status" value="1"/>
</dbReference>
<dbReference type="Pfam" id="PF00443">
    <property type="entry name" value="UCH"/>
    <property type="match status" value="1"/>
</dbReference>
<dbReference type="SUPFAM" id="SSF54001">
    <property type="entry name" value="Cysteine proteinases"/>
    <property type="match status" value="1"/>
</dbReference>
<dbReference type="PROSITE" id="PS00972">
    <property type="entry name" value="USP_1"/>
    <property type="match status" value="1"/>
</dbReference>
<dbReference type="PROSITE" id="PS00973">
    <property type="entry name" value="USP_2"/>
    <property type="match status" value="1"/>
</dbReference>
<dbReference type="PROSITE" id="PS50235">
    <property type="entry name" value="USP_3"/>
    <property type="match status" value="1"/>
</dbReference>
<feature type="chain" id="PRO_0000378995" description="Ubiquitin carboxyl-terminal hydrolase 46">
    <location>
        <begin position="1"/>
        <end position="370"/>
    </location>
</feature>
<feature type="domain" description="USP">
    <location>
        <begin position="35"/>
        <end position="369"/>
    </location>
</feature>
<feature type="active site" description="Nucleophile" evidence="3 4">
    <location>
        <position position="44"/>
    </location>
</feature>
<feature type="active site" description="Proton acceptor" evidence="3 4">
    <location>
        <position position="317"/>
    </location>
</feature>
<feature type="binding site" evidence="1">
    <location>
        <position position="186"/>
    </location>
    <ligand>
        <name>Zn(2+)</name>
        <dbReference type="ChEBI" id="CHEBI:29105"/>
    </ligand>
</feature>
<feature type="binding site" evidence="1">
    <location>
        <position position="189"/>
    </location>
    <ligand>
        <name>Zn(2+)</name>
        <dbReference type="ChEBI" id="CHEBI:29105"/>
    </ligand>
</feature>
<feature type="binding site" evidence="1">
    <location>
        <position position="233"/>
    </location>
    <ligand>
        <name>Zn(2+)</name>
        <dbReference type="ChEBI" id="CHEBI:29105"/>
    </ligand>
</feature>
<feature type="binding site" evidence="1">
    <location>
        <position position="236"/>
    </location>
    <ligand>
        <name>Zn(2+)</name>
        <dbReference type="ChEBI" id="CHEBI:29105"/>
    </ligand>
</feature>
<comment type="function">
    <text evidence="1 2">Deubiquitinating enzyme that plays a role in behavior, possibly by regulating GABA action (By similarity). Has almost no deubiquitinating activity by itself and requires the interaction with wdr48 to have a high activity (By similarity).</text>
</comment>
<comment type="catalytic activity">
    <reaction evidence="1">
        <text>Thiol-dependent hydrolysis of ester, thioester, amide, peptide and isopeptide bonds formed by the C-terminal Gly of ubiquitin (a 76-residue protein attached to proteins as an intracellular targeting signal).</text>
        <dbReference type="EC" id="3.4.19.12"/>
    </reaction>
</comment>
<comment type="subunit">
    <text evidence="1">Interacts with WDR48.</text>
</comment>
<comment type="similarity">
    <text evidence="5">Belongs to the peptidase C19 family. USP12/USP46 subfamily.</text>
</comment>
<comment type="sequence caution" evidence="5">
    <conflict type="erroneous gene model prediction">
        <sequence resource="EMBL-CDS" id="CAN88313"/>
    </conflict>
</comment>
<protein>
    <recommendedName>
        <fullName>Ubiquitin carboxyl-terminal hydrolase 46</fullName>
        <ecNumber evidence="1">3.4.19.12</ecNumber>
    </recommendedName>
    <alternativeName>
        <fullName>Deubiquitinating enzyme 46</fullName>
    </alternativeName>
    <alternativeName>
        <fullName>Ubiquitin thioesterase 46</fullName>
    </alternativeName>
    <alternativeName>
        <fullName>Ubiquitin-specific-processing protease 46</fullName>
    </alternativeName>
</protein>
<reference key="1">
    <citation type="journal article" date="2013" name="Nature">
        <title>The zebrafish reference genome sequence and its relationship to the human genome.</title>
        <authorList>
            <person name="Howe K."/>
            <person name="Clark M.D."/>
            <person name="Torroja C.F."/>
            <person name="Torrance J."/>
            <person name="Berthelot C."/>
            <person name="Muffato M."/>
            <person name="Collins J.E."/>
            <person name="Humphray S."/>
            <person name="McLaren K."/>
            <person name="Matthews L."/>
            <person name="McLaren S."/>
            <person name="Sealy I."/>
            <person name="Caccamo M."/>
            <person name="Churcher C."/>
            <person name="Scott C."/>
            <person name="Barrett J.C."/>
            <person name="Koch R."/>
            <person name="Rauch G.J."/>
            <person name="White S."/>
            <person name="Chow W."/>
            <person name="Kilian B."/>
            <person name="Quintais L.T."/>
            <person name="Guerra-Assuncao J.A."/>
            <person name="Zhou Y."/>
            <person name="Gu Y."/>
            <person name="Yen J."/>
            <person name="Vogel J.H."/>
            <person name="Eyre T."/>
            <person name="Redmond S."/>
            <person name="Banerjee R."/>
            <person name="Chi J."/>
            <person name="Fu B."/>
            <person name="Langley E."/>
            <person name="Maguire S.F."/>
            <person name="Laird G.K."/>
            <person name="Lloyd D."/>
            <person name="Kenyon E."/>
            <person name="Donaldson S."/>
            <person name="Sehra H."/>
            <person name="Almeida-King J."/>
            <person name="Loveland J."/>
            <person name="Trevanion S."/>
            <person name="Jones M."/>
            <person name="Quail M."/>
            <person name="Willey D."/>
            <person name="Hunt A."/>
            <person name="Burton J."/>
            <person name="Sims S."/>
            <person name="McLay K."/>
            <person name="Plumb B."/>
            <person name="Davis J."/>
            <person name="Clee C."/>
            <person name="Oliver K."/>
            <person name="Clark R."/>
            <person name="Riddle C."/>
            <person name="Elliot D."/>
            <person name="Threadgold G."/>
            <person name="Harden G."/>
            <person name="Ware D."/>
            <person name="Begum S."/>
            <person name="Mortimore B."/>
            <person name="Kerry G."/>
            <person name="Heath P."/>
            <person name="Phillimore B."/>
            <person name="Tracey A."/>
            <person name="Corby N."/>
            <person name="Dunn M."/>
            <person name="Johnson C."/>
            <person name="Wood J."/>
            <person name="Clark S."/>
            <person name="Pelan S."/>
            <person name="Griffiths G."/>
            <person name="Smith M."/>
            <person name="Glithero R."/>
            <person name="Howden P."/>
            <person name="Barker N."/>
            <person name="Lloyd C."/>
            <person name="Stevens C."/>
            <person name="Harley J."/>
            <person name="Holt K."/>
            <person name="Panagiotidis G."/>
            <person name="Lovell J."/>
            <person name="Beasley H."/>
            <person name="Henderson C."/>
            <person name="Gordon D."/>
            <person name="Auger K."/>
            <person name="Wright D."/>
            <person name="Collins J."/>
            <person name="Raisen C."/>
            <person name="Dyer L."/>
            <person name="Leung K."/>
            <person name="Robertson L."/>
            <person name="Ambridge K."/>
            <person name="Leongamornlert D."/>
            <person name="McGuire S."/>
            <person name="Gilderthorp R."/>
            <person name="Griffiths C."/>
            <person name="Manthravadi D."/>
            <person name="Nichol S."/>
            <person name="Barker G."/>
            <person name="Whitehead S."/>
            <person name="Kay M."/>
            <person name="Brown J."/>
            <person name="Murnane C."/>
            <person name="Gray E."/>
            <person name="Humphries M."/>
            <person name="Sycamore N."/>
            <person name="Barker D."/>
            <person name="Saunders D."/>
            <person name="Wallis J."/>
            <person name="Babbage A."/>
            <person name="Hammond S."/>
            <person name="Mashreghi-Mohammadi M."/>
            <person name="Barr L."/>
            <person name="Martin S."/>
            <person name="Wray P."/>
            <person name="Ellington A."/>
            <person name="Matthews N."/>
            <person name="Ellwood M."/>
            <person name="Woodmansey R."/>
            <person name="Clark G."/>
            <person name="Cooper J."/>
            <person name="Tromans A."/>
            <person name="Grafham D."/>
            <person name="Skuce C."/>
            <person name="Pandian R."/>
            <person name="Andrews R."/>
            <person name="Harrison E."/>
            <person name="Kimberley A."/>
            <person name="Garnett J."/>
            <person name="Fosker N."/>
            <person name="Hall R."/>
            <person name="Garner P."/>
            <person name="Kelly D."/>
            <person name="Bird C."/>
            <person name="Palmer S."/>
            <person name="Gehring I."/>
            <person name="Berger A."/>
            <person name="Dooley C.M."/>
            <person name="Ersan-Urun Z."/>
            <person name="Eser C."/>
            <person name="Geiger H."/>
            <person name="Geisler M."/>
            <person name="Karotki L."/>
            <person name="Kirn A."/>
            <person name="Konantz J."/>
            <person name="Konantz M."/>
            <person name="Oberlander M."/>
            <person name="Rudolph-Geiger S."/>
            <person name="Teucke M."/>
            <person name="Lanz C."/>
            <person name="Raddatz G."/>
            <person name="Osoegawa K."/>
            <person name="Zhu B."/>
            <person name="Rapp A."/>
            <person name="Widaa S."/>
            <person name="Langford C."/>
            <person name="Yang F."/>
            <person name="Schuster S.C."/>
            <person name="Carter N.P."/>
            <person name="Harrow J."/>
            <person name="Ning Z."/>
            <person name="Herrero J."/>
            <person name="Searle S.M."/>
            <person name="Enright A."/>
            <person name="Geisler R."/>
            <person name="Plasterk R.H."/>
            <person name="Lee C."/>
            <person name="Westerfield M."/>
            <person name="de Jong P.J."/>
            <person name="Zon L.I."/>
            <person name="Postlethwait J.H."/>
            <person name="Nusslein-Volhard C."/>
            <person name="Hubbard T.J."/>
            <person name="Roest Crollius H."/>
            <person name="Rogers J."/>
            <person name="Stemple D.L."/>
        </authorList>
    </citation>
    <scope>NUCLEOTIDE SEQUENCE [LARGE SCALE GENOMIC DNA]</scope>
    <source>
        <strain>Tuebingen</strain>
    </source>
</reference>
<proteinExistence type="inferred from homology"/>
<evidence type="ECO:0000250" key="1">
    <source>
        <dbReference type="UniProtKB" id="P62068"/>
    </source>
</evidence>
<evidence type="ECO:0000250" key="2">
    <source>
        <dbReference type="UniProtKB" id="P62069"/>
    </source>
</evidence>
<evidence type="ECO:0000255" key="3">
    <source>
        <dbReference type="PROSITE-ProRule" id="PRU10092"/>
    </source>
</evidence>
<evidence type="ECO:0000255" key="4">
    <source>
        <dbReference type="PROSITE-ProRule" id="PRU10093"/>
    </source>
</evidence>
<evidence type="ECO:0000305" key="5"/>
<organism>
    <name type="scientific">Danio rerio</name>
    <name type="common">Zebrafish</name>
    <name type="synonym">Brachydanio rerio</name>
    <dbReference type="NCBI Taxonomy" id="7955"/>
    <lineage>
        <taxon>Eukaryota</taxon>
        <taxon>Metazoa</taxon>
        <taxon>Chordata</taxon>
        <taxon>Craniata</taxon>
        <taxon>Vertebrata</taxon>
        <taxon>Euteleostomi</taxon>
        <taxon>Actinopterygii</taxon>
        <taxon>Neopterygii</taxon>
        <taxon>Teleostei</taxon>
        <taxon>Ostariophysi</taxon>
        <taxon>Cypriniformes</taxon>
        <taxon>Danionidae</taxon>
        <taxon>Danioninae</taxon>
        <taxon>Danio</taxon>
    </lineage>
</organism>
<keyword id="KW-0085">Behavior</keyword>
<keyword id="KW-0378">Hydrolase</keyword>
<keyword id="KW-0479">Metal-binding</keyword>
<keyword id="KW-0645">Protease</keyword>
<keyword id="KW-1185">Reference proteome</keyword>
<keyword id="KW-0788">Thiol protease</keyword>
<keyword id="KW-0833">Ubl conjugation pathway</keyword>
<keyword id="KW-0862">Zinc</keyword>
<gene>
    <name type="primary">usp46</name>
    <name type="ORF">ch73-16a12.1</name>
</gene>
<accession>A5WWB0</accession>
<sequence>MTVRNIASICNMGTNASALEKDIGPEQFPINEHYFGLVNFGNTCYCNSVLQALYFCRPFRENVLAYKVQQKKKENLLTCLADLFHSIATQKKKVGVIPPKKFISRLRKENDLFDNYMQQDAHEFLNYLLNTVADILQEERKQEKQNGRLKNNGTAIATDTEPEQNKIDPTWVHEIFQGTLTNETRCLNCETVSSKDEDFLDLSVDVEQNTSITHCLRDFSNTETLCSEYKYYCEMCCSKQEAQKRMRVKKLPMILALHLKRFKYMEQLHRYTKLSYRVVFPLELRLFNTSGDAVNLDRMYDLVAVVVHCGSGPNRGHYITIVKSHGFWLLFDDDIVEKIDAQAIEEFYGLTSDISKNSESGYILFYQSRE</sequence>
<name>UBP46_DANRE</name>